<protein>
    <recommendedName>
        <fullName evidence="1">Tagatose-6-phosphate kinase</fullName>
        <ecNumber evidence="1">2.7.1.144</ecNumber>
    </recommendedName>
    <alternativeName>
        <fullName evidence="1">Phosphotagatokinase</fullName>
    </alternativeName>
</protein>
<evidence type="ECO:0000255" key="1">
    <source>
        <dbReference type="HAMAP-Rule" id="MF_01557"/>
    </source>
</evidence>
<evidence type="ECO:0007829" key="2">
    <source>
        <dbReference type="PDB" id="2JG1"/>
    </source>
</evidence>
<accession>P0A0B9</accession>
<accession>P11099</accession>
<accession>Q2G2R2</accession>
<proteinExistence type="evidence at protein level"/>
<dbReference type="EC" id="2.7.1.144" evidence="1"/>
<dbReference type="EMBL" id="X14827">
    <property type="protein sequence ID" value="CAA32935.1"/>
    <property type="molecule type" value="Genomic_DNA"/>
</dbReference>
<dbReference type="EMBL" id="CP000253">
    <property type="protein sequence ID" value="ABD31473.1"/>
    <property type="molecule type" value="Genomic_DNA"/>
</dbReference>
<dbReference type="PIR" id="S04358">
    <property type="entry name" value="S04358"/>
</dbReference>
<dbReference type="RefSeq" id="WP_000604135.1">
    <property type="nucleotide sequence ID" value="NZ_LS483365.1"/>
</dbReference>
<dbReference type="RefSeq" id="YP_500920.1">
    <property type="nucleotide sequence ID" value="NC_007795.1"/>
</dbReference>
<dbReference type="PDB" id="2JG1">
    <property type="method" value="X-ray"/>
    <property type="resolution" value="2.00 A"/>
    <property type="chains" value="A/B/C/D=1-310"/>
</dbReference>
<dbReference type="PDB" id="2JGV">
    <property type="method" value="X-ray"/>
    <property type="resolution" value="2.00 A"/>
    <property type="chains" value="A/B/C/D=1-310"/>
</dbReference>
<dbReference type="PDBsum" id="2JG1"/>
<dbReference type="PDBsum" id="2JGV"/>
<dbReference type="SMR" id="P0A0B9"/>
<dbReference type="STRING" id="93061.SAOUHSC_02453"/>
<dbReference type="PaxDb" id="1280-SAXN108_2446"/>
<dbReference type="GeneID" id="3919016"/>
<dbReference type="KEGG" id="sao:SAOUHSC_02453"/>
<dbReference type="PATRIC" id="fig|93061.5.peg.2212"/>
<dbReference type="eggNOG" id="COG1105">
    <property type="taxonomic scope" value="Bacteria"/>
</dbReference>
<dbReference type="HOGENOM" id="CLU_050013_5_0_9"/>
<dbReference type="OrthoDB" id="9801219at2"/>
<dbReference type="BRENDA" id="2.7.1.144">
    <property type="organism ID" value="3352"/>
</dbReference>
<dbReference type="UniPathway" id="UPA00704">
    <property type="reaction ID" value="UER00715"/>
</dbReference>
<dbReference type="EvolutionaryTrace" id="P0A0B9"/>
<dbReference type="PRO" id="PR:P0A0B9"/>
<dbReference type="Proteomes" id="UP000008816">
    <property type="component" value="Chromosome"/>
</dbReference>
<dbReference type="GO" id="GO:0005829">
    <property type="term" value="C:cytosol"/>
    <property type="evidence" value="ECO:0000318"/>
    <property type="project" value="GO_Central"/>
</dbReference>
<dbReference type="GO" id="GO:0005524">
    <property type="term" value="F:ATP binding"/>
    <property type="evidence" value="ECO:0007669"/>
    <property type="project" value="UniProtKB-KW"/>
</dbReference>
<dbReference type="GO" id="GO:0008443">
    <property type="term" value="F:phosphofructokinase activity"/>
    <property type="evidence" value="ECO:0000318"/>
    <property type="project" value="GO_Central"/>
</dbReference>
<dbReference type="GO" id="GO:0009024">
    <property type="term" value="F:tagatose-6-phosphate kinase activity"/>
    <property type="evidence" value="ECO:0007669"/>
    <property type="project" value="UniProtKB-UniRule"/>
</dbReference>
<dbReference type="GO" id="GO:2001059">
    <property type="term" value="P:D-tagatose 6-phosphate catabolic process"/>
    <property type="evidence" value="ECO:0007669"/>
    <property type="project" value="UniProtKB-UniRule"/>
</dbReference>
<dbReference type="GO" id="GO:0019512">
    <property type="term" value="P:lactose catabolic process via tagatose-6-phosphate"/>
    <property type="evidence" value="ECO:0007669"/>
    <property type="project" value="InterPro"/>
</dbReference>
<dbReference type="CDD" id="cd01164">
    <property type="entry name" value="FruK_PfkB_like"/>
    <property type="match status" value="1"/>
</dbReference>
<dbReference type="FunFam" id="3.40.1190.20:FF:000001">
    <property type="entry name" value="Phosphofructokinase"/>
    <property type="match status" value="1"/>
</dbReference>
<dbReference type="Gene3D" id="3.40.1190.20">
    <property type="match status" value="1"/>
</dbReference>
<dbReference type="HAMAP" id="MF_01557">
    <property type="entry name" value="LacC"/>
    <property type="match status" value="1"/>
</dbReference>
<dbReference type="InterPro" id="IPR002173">
    <property type="entry name" value="Carboh/pur_kinase_PfkB_CS"/>
</dbReference>
<dbReference type="InterPro" id="IPR005926">
    <property type="entry name" value="LacC"/>
</dbReference>
<dbReference type="InterPro" id="IPR011611">
    <property type="entry name" value="PfkB_dom"/>
</dbReference>
<dbReference type="InterPro" id="IPR029056">
    <property type="entry name" value="Ribokinase-like"/>
</dbReference>
<dbReference type="InterPro" id="IPR017583">
    <property type="entry name" value="Tagatose/fructose_Pkinase"/>
</dbReference>
<dbReference type="NCBIfam" id="TIGR03168">
    <property type="entry name" value="1-PFK"/>
    <property type="match status" value="1"/>
</dbReference>
<dbReference type="NCBIfam" id="TIGR01231">
    <property type="entry name" value="lacC"/>
    <property type="match status" value="1"/>
</dbReference>
<dbReference type="NCBIfam" id="NF010033">
    <property type="entry name" value="PRK13508.1"/>
    <property type="match status" value="1"/>
</dbReference>
<dbReference type="PANTHER" id="PTHR46566:SF5">
    <property type="entry name" value="1-PHOSPHOFRUCTOKINASE"/>
    <property type="match status" value="1"/>
</dbReference>
<dbReference type="PANTHER" id="PTHR46566">
    <property type="entry name" value="1-PHOSPHOFRUCTOKINASE-RELATED"/>
    <property type="match status" value="1"/>
</dbReference>
<dbReference type="Pfam" id="PF00294">
    <property type="entry name" value="PfkB"/>
    <property type="match status" value="1"/>
</dbReference>
<dbReference type="PIRSF" id="PIRSF000535">
    <property type="entry name" value="1PFK/6PFK/LacC"/>
    <property type="match status" value="1"/>
</dbReference>
<dbReference type="SUPFAM" id="SSF53613">
    <property type="entry name" value="Ribokinase-like"/>
    <property type="match status" value="1"/>
</dbReference>
<dbReference type="PROSITE" id="PS00583">
    <property type="entry name" value="PFKB_KINASES_1"/>
    <property type="match status" value="1"/>
</dbReference>
<dbReference type="PROSITE" id="PS00584">
    <property type="entry name" value="PFKB_KINASES_2"/>
    <property type="match status" value="1"/>
</dbReference>
<comment type="catalytic activity">
    <reaction evidence="1">
        <text>D-tagatofuranose 6-phosphate + ATP = D-tagatofuranose 1,6-bisphosphate + ADP + H(+)</text>
        <dbReference type="Rhea" id="RHEA:12420"/>
        <dbReference type="ChEBI" id="CHEBI:15378"/>
        <dbReference type="ChEBI" id="CHEBI:30616"/>
        <dbReference type="ChEBI" id="CHEBI:58694"/>
        <dbReference type="ChEBI" id="CHEBI:58695"/>
        <dbReference type="ChEBI" id="CHEBI:456216"/>
        <dbReference type="EC" id="2.7.1.144"/>
    </reaction>
</comment>
<comment type="pathway">
    <text evidence="1">Carbohydrate metabolism; D-tagatose 6-phosphate degradation; D-glyceraldehyde 3-phosphate and glycerone phosphate from D-tagatose 6-phosphate: step 1/2.</text>
</comment>
<comment type="similarity">
    <text evidence="1">Belongs to the carbohydrate kinase PfkB family. LacC subfamily.</text>
</comment>
<name>LACC_STAA8</name>
<reference key="1">
    <citation type="journal article" date="1989" name="Nucleic Acids Res.">
        <title>The nucleotide sequence of the lacC and lacD genes of Staphylococcus aureus.</title>
        <authorList>
            <person name="Rosey E.L."/>
            <person name="Stewart G.C."/>
        </authorList>
    </citation>
    <scope>NUCLEOTIDE SEQUENCE [GENOMIC DNA]</scope>
</reference>
<reference key="2">
    <citation type="book" date="2006" name="Gram positive pathogens, 2nd edition">
        <title>The Staphylococcus aureus NCTC 8325 genome.</title>
        <editorList>
            <person name="Fischetti V."/>
            <person name="Novick R."/>
            <person name="Ferretti J."/>
            <person name="Portnoy D."/>
            <person name="Rood J."/>
        </editorList>
        <authorList>
            <person name="Gillaspy A.F."/>
            <person name="Worrell V."/>
            <person name="Orvis J."/>
            <person name="Roe B.A."/>
            <person name="Dyer D.W."/>
            <person name="Iandolo J.J."/>
        </authorList>
    </citation>
    <scope>NUCLEOTIDE SEQUENCE [LARGE SCALE GENOMIC DNA]</scope>
    <source>
        <strain>NCTC 8325 / PS 47</strain>
    </source>
</reference>
<reference key="3">
    <citation type="journal article" date="1991" name="J. Bacteriol.">
        <title>Lactose metabolism by Staphylococcus aureus: characterization of lacABCD, the structural genes of the tagatose 6-phosphate pathway.</title>
        <authorList>
            <person name="Rosey E.L."/>
            <person name="Oskouian B."/>
            <person name="Stewart G.C."/>
        </authorList>
    </citation>
    <scope>CHARACTERIZATION</scope>
</reference>
<keyword id="KW-0002">3D-structure</keyword>
<keyword id="KW-0067">ATP-binding</keyword>
<keyword id="KW-0418">Kinase</keyword>
<keyword id="KW-0423">Lactose metabolism</keyword>
<keyword id="KW-0547">Nucleotide-binding</keyword>
<keyword id="KW-1185">Reference proteome</keyword>
<keyword id="KW-0808">Transferase</keyword>
<gene>
    <name evidence="1" type="primary">lacC</name>
    <name type="ordered locus">SAOUHSC_02453</name>
</gene>
<sequence>MILTLTLNPSVDISYPLTALKLDDVNRVQEVSKTAGGKGLNVTRVLAQVGEPVLASGFIGGELGQFIAKKLDHADIKHAFYNIKGETRNCIAILHEGQQTEILEQGPEIDNQEAAGFIKHFEQLLEKVEAVAISGSLPKGLNQDYYAQIIERCQNKGVPVILDCSGATLQTVLENPYKPTVIKPNISELYQLLNQPLDESLESLKQAVSQPLFEGIEWIIVSLGAQGAFAKHNHTFYRVNIPTISVLNPVGSGDSTVAGITSAILNHENDHDLLKKANTLGMLNAQEAQTGYVNLNNYDDLFNQIEVLEV</sequence>
<feature type="chain" id="PRO_0000203916" description="Tagatose-6-phosphate kinase">
    <location>
        <begin position="1"/>
        <end position="310"/>
    </location>
</feature>
<feature type="strand" evidence="2">
    <location>
        <begin position="2"/>
        <end position="8"/>
    </location>
</feature>
<feature type="strand" evidence="2">
    <location>
        <begin position="10"/>
        <end position="18"/>
    </location>
</feature>
<feature type="strand" evidence="2">
    <location>
        <begin position="24"/>
        <end position="29"/>
    </location>
</feature>
<feature type="strand" evidence="2">
    <location>
        <begin position="32"/>
        <end position="36"/>
    </location>
</feature>
<feature type="helix" evidence="2">
    <location>
        <begin position="38"/>
        <end position="49"/>
    </location>
</feature>
<feature type="strand" evidence="2">
    <location>
        <begin position="53"/>
        <end position="60"/>
    </location>
</feature>
<feature type="helix" evidence="2">
    <location>
        <begin position="61"/>
        <end position="73"/>
    </location>
</feature>
<feature type="strand" evidence="2">
    <location>
        <begin position="81"/>
        <end position="85"/>
    </location>
</feature>
<feature type="strand" evidence="2">
    <location>
        <begin position="88"/>
        <end position="95"/>
    </location>
</feature>
<feature type="strand" evidence="2">
    <location>
        <begin position="98"/>
        <end position="104"/>
    </location>
</feature>
<feature type="helix" evidence="2">
    <location>
        <begin position="111"/>
        <end position="124"/>
    </location>
</feature>
<feature type="helix" evidence="2">
    <location>
        <begin position="125"/>
        <end position="127"/>
    </location>
</feature>
<feature type="strand" evidence="2">
    <location>
        <begin position="129"/>
        <end position="135"/>
    </location>
</feature>
<feature type="helix" evidence="2">
    <location>
        <begin position="145"/>
        <end position="154"/>
    </location>
</feature>
<feature type="turn" evidence="2">
    <location>
        <begin position="155"/>
        <end position="157"/>
    </location>
</feature>
<feature type="strand" evidence="2">
    <location>
        <begin position="160"/>
        <end position="163"/>
    </location>
</feature>
<feature type="helix" evidence="2">
    <location>
        <begin position="166"/>
        <end position="173"/>
    </location>
</feature>
<feature type="strand" evidence="2">
    <location>
        <begin position="175"/>
        <end position="177"/>
    </location>
</feature>
<feature type="strand" evidence="2">
    <location>
        <begin position="180"/>
        <end position="182"/>
    </location>
</feature>
<feature type="helix" evidence="2">
    <location>
        <begin position="186"/>
        <end position="192"/>
    </location>
</feature>
<feature type="helix" evidence="2">
    <location>
        <begin position="201"/>
        <end position="209"/>
    </location>
</feature>
<feature type="helix" evidence="2">
    <location>
        <begin position="211"/>
        <end position="213"/>
    </location>
</feature>
<feature type="strand" evidence="2">
    <location>
        <begin position="217"/>
        <end position="222"/>
    </location>
</feature>
<feature type="helix" evidence="2">
    <location>
        <begin position="224"/>
        <end position="226"/>
    </location>
</feature>
<feature type="strand" evidence="2">
    <location>
        <begin position="228"/>
        <end position="232"/>
    </location>
</feature>
<feature type="strand" evidence="2">
    <location>
        <begin position="235"/>
        <end position="240"/>
    </location>
</feature>
<feature type="helix" evidence="2">
    <location>
        <begin position="252"/>
        <end position="265"/>
    </location>
</feature>
<feature type="helix" evidence="2">
    <location>
        <begin position="270"/>
        <end position="285"/>
    </location>
</feature>
<feature type="strand" evidence="2">
    <location>
        <begin position="287"/>
        <end position="291"/>
    </location>
</feature>
<feature type="helix" evidence="2">
    <location>
        <begin position="295"/>
        <end position="297"/>
    </location>
</feature>
<feature type="helix" evidence="2">
    <location>
        <begin position="298"/>
        <end position="302"/>
    </location>
</feature>
<feature type="strand" evidence="2">
    <location>
        <begin position="306"/>
        <end position="309"/>
    </location>
</feature>
<organism>
    <name type="scientific">Staphylococcus aureus (strain NCTC 8325 / PS 47)</name>
    <dbReference type="NCBI Taxonomy" id="93061"/>
    <lineage>
        <taxon>Bacteria</taxon>
        <taxon>Bacillati</taxon>
        <taxon>Bacillota</taxon>
        <taxon>Bacilli</taxon>
        <taxon>Bacillales</taxon>
        <taxon>Staphylococcaceae</taxon>
        <taxon>Staphylococcus</taxon>
    </lineage>
</organism>